<evidence type="ECO:0000255" key="1">
    <source>
        <dbReference type="HAMAP-Rule" id="MF_00443"/>
    </source>
</evidence>
<comment type="function">
    <text evidence="1">Catalyzes the rearrangement of 1-deoxy-D-xylulose 5-phosphate (DXP) to produce the thiazole phosphate moiety of thiamine. Sulfur is provided by the thiocarboxylate moiety of the carrier protein ThiS. In vitro, sulfur can be provided by H(2)S.</text>
</comment>
<comment type="catalytic activity">
    <reaction evidence="1">
        <text>[ThiS sulfur-carrier protein]-C-terminal-Gly-aminoethanethioate + 2-iminoacetate + 1-deoxy-D-xylulose 5-phosphate = [ThiS sulfur-carrier protein]-C-terminal Gly-Gly + 2-[(2R,5Z)-2-carboxy-4-methylthiazol-5(2H)-ylidene]ethyl phosphate + 2 H2O + H(+)</text>
        <dbReference type="Rhea" id="RHEA:26297"/>
        <dbReference type="Rhea" id="RHEA-COMP:12909"/>
        <dbReference type="Rhea" id="RHEA-COMP:19908"/>
        <dbReference type="ChEBI" id="CHEBI:15377"/>
        <dbReference type="ChEBI" id="CHEBI:15378"/>
        <dbReference type="ChEBI" id="CHEBI:57792"/>
        <dbReference type="ChEBI" id="CHEBI:62899"/>
        <dbReference type="ChEBI" id="CHEBI:77846"/>
        <dbReference type="ChEBI" id="CHEBI:90778"/>
        <dbReference type="ChEBI" id="CHEBI:232372"/>
        <dbReference type="EC" id="2.8.1.10"/>
    </reaction>
</comment>
<comment type="pathway">
    <text evidence="1">Cofactor biosynthesis; thiamine diphosphate biosynthesis.</text>
</comment>
<comment type="subunit">
    <text evidence="1">Homotetramer. Forms heterodimers with either ThiH or ThiS.</text>
</comment>
<comment type="subcellular location">
    <subcellularLocation>
        <location evidence="1">Cytoplasm</location>
    </subcellularLocation>
</comment>
<comment type="similarity">
    <text evidence="1">Belongs to the ThiG family.</text>
</comment>
<reference key="1">
    <citation type="journal article" date="2008" name="Environ. Microbiol.">
        <title>The complete genome sequence of Moorella thermoacetica (f. Clostridium thermoaceticum).</title>
        <authorList>
            <person name="Pierce E."/>
            <person name="Xie G."/>
            <person name="Barabote R.D."/>
            <person name="Saunders E."/>
            <person name="Han C.S."/>
            <person name="Detter J.C."/>
            <person name="Richardson P."/>
            <person name="Brettin T.S."/>
            <person name="Das A."/>
            <person name="Ljungdahl L.G."/>
            <person name="Ragsdale S.W."/>
        </authorList>
    </citation>
    <scope>NUCLEOTIDE SEQUENCE [LARGE SCALE GENOMIC DNA]</scope>
    <source>
        <strain>ATCC 39073 / JCM 9320</strain>
    </source>
</reference>
<organism>
    <name type="scientific">Moorella thermoacetica (strain ATCC 39073 / JCM 9320)</name>
    <dbReference type="NCBI Taxonomy" id="264732"/>
    <lineage>
        <taxon>Bacteria</taxon>
        <taxon>Bacillati</taxon>
        <taxon>Bacillota</taxon>
        <taxon>Clostridia</taxon>
        <taxon>Moorellales</taxon>
        <taxon>Moorellaceae</taxon>
        <taxon>Moorella</taxon>
    </lineage>
</organism>
<protein>
    <recommendedName>
        <fullName evidence="1">Thiazole synthase</fullName>
        <ecNumber evidence="1">2.8.1.10</ecNumber>
    </recommendedName>
</protein>
<gene>
    <name evidence="1" type="primary">thiG</name>
    <name type="ordered locus">Moth_1663</name>
</gene>
<feature type="chain" id="PRO_0000236344" description="Thiazole synthase">
    <location>
        <begin position="1"/>
        <end position="255"/>
    </location>
</feature>
<feature type="active site" description="Schiff-base intermediate with DXP" evidence="1">
    <location>
        <position position="97"/>
    </location>
</feature>
<feature type="binding site" evidence="1">
    <location>
        <position position="158"/>
    </location>
    <ligand>
        <name>1-deoxy-D-xylulose 5-phosphate</name>
        <dbReference type="ChEBI" id="CHEBI:57792"/>
    </ligand>
</feature>
<feature type="binding site" evidence="1">
    <location>
        <begin position="184"/>
        <end position="185"/>
    </location>
    <ligand>
        <name>1-deoxy-D-xylulose 5-phosphate</name>
        <dbReference type="ChEBI" id="CHEBI:57792"/>
    </ligand>
</feature>
<feature type="binding site" evidence="1">
    <location>
        <begin position="206"/>
        <end position="207"/>
    </location>
    <ligand>
        <name>1-deoxy-D-xylulose 5-phosphate</name>
        <dbReference type="ChEBI" id="CHEBI:57792"/>
    </ligand>
</feature>
<proteinExistence type="inferred from homology"/>
<accession>Q2RHX4</accession>
<keyword id="KW-0963">Cytoplasm</keyword>
<keyword id="KW-0704">Schiff base</keyword>
<keyword id="KW-0784">Thiamine biosynthesis</keyword>
<keyword id="KW-0808">Transferase</keyword>
<dbReference type="EC" id="2.8.1.10" evidence="1"/>
<dbReference type="EMBL" id="CP000232">
    <property type="protein sequence ID" value="ABC19965.1"/>
    <property type="molecule type" value="Genomic_DNA"/>
</dbReference>
<dbReference type="RefSeq" id="YP_430508.1">
    <property type="nucleotide sequence ID" value="NC_007644.1"/>
</dbReference>
<dbReference type="SMR" id="Q2RHX4"/>
<dbReference type="STRING" id="264732.Moth_1663"/>
<dbReference type="EnsemblBacteria" id="ABC19965">
    <property type="protein sequence ID" value="ABC19965"/>
    <property type="gene ID" value="Moth_1663"/>
</dbReference>
<dbReference type="KEGG" id="mta:Moth_1663"/>
<dbReference type="PATRIC" id="fig|264732.11.peg.1803"/>
<dbReference type="eggNOG" id="COG2022">
    <property type="taxonomic scope" value="Bacteria"/>
</dbReference>
<dbReference type="HOGENOM" id="CLU_062233_1_0_9"/>
<dbReference type="OrthoDB" id="9805935at2"/>
<dbReference type="UniPathway" id="UPA00060"/>
<dbReference type="GO" id="GO:0005737">
    <property type="term" value="C:cytoplasm"/>
    <property type="evidence" value="ECO:0007669"/>
    <property type="project" value="UniProtKB-SubCell"/>
</dbReference>
<dbReference type="GO" id="GO:1990107">
    <property type="term" value="F:thiazole synthase activity"/>
    <property type="evidence" value="ECO:0007669"/>
    <property type="project" value="UniProtKB-EC"/>
</dbReference>
<dbReference type="GO" id="GO:0009229">
    <property type="term" value="P:thiamine diphosphate biosynthetic process"/>
    <property type="evidence" value="ECO:0007669"/>
    <property type="project" value="UniProtKB-UniRule"/>
</dbReference>
<dbReference type="CDD" id="cd04728">
    <property type="entry name" value="ThiG"/>
    <property type="match status" value="1"/>
</dbReference>
<dbReference type="Gene3D" id="3.20.20.70">
    <property type="entry name" value="Aldolase class I"/>
    <property type="match status" value="1"/>
</dbReference>
<dbReference type="HAMAP" id="MF_00443">
    <property type="entry name" value="ThiG"/>
    <property type="match status" value="1"/>
</dbReference>
<dbReference type="InterPro" id="IPR013785">
    <property type="entry name" value="Aldolase_TIM"/>
</dbReference>
<dbReference type="InterPro" id="IPR033983">
    <property type="entry name" value="Thiazole_synthase_ThiG"/>
</dbReference>
<dbReference type="InterPro" id="IPR008867">
    <property type="entry name" value="ThiG"/>
</dbReference>
<dbReference type="PANTHER" id="PTHR34266">
    <property type="entry name" value="THIAZOLE SYNTHASE"/>
    <property type="match status" value="1"/>
</dbReference>
<dbReference type="PANTHER" id="PTHR34266:SF2">
    <property type="entry name" value="THIAZOLE SYNTHASE"/>
    <property type="match status" value="1"/>
</dbReference>
<dbReference type="Pfam" id="PF05690">
    <property type="entry name" value="ThiG"/>
    <property type="match status" value="1"/>
</dbReference>
<dbReference type="SUPFAM" id="SSF110399">
    <property type="entry name" value="ThiG-like"/>
    <property type="match status" value="1"/>
</dbReference>
<name>THIG_MOOTA</name>
<sequence>MADELIIGDKALTSRLFIGTGKFASHEIMGQAVSQSGAQVVTVALRRVDLDNPQESELKFIPAGCVLMPNTSGARTAEEAVKIARIARAAGCGNWVKIEVVTDQRYLLPDNYETVKATEILAKEGFVVLPYMNPDLMVAKRLKEAGAAAIMPLGAPIGSNRGLKTREMIRILIEEIDLPIIVDAGIGKPSEAMEAMEMGAAAVLVNTAIATARDPVAMARAFSMAVEAGRMAYLAGLAPTREYAEASSPLTGFLV</sequence>